<evidence type="ECO:0000255" key="1">
    <source>
        <dbReference type="HAMAP-Rule" id="MF_00022"/>
    </source>
</evidence>
<sequence>MNKTIRTRYAPSPTGYLHIGGARTALFCYLFAKHSNGDFIFRLEDTDVERNVEGGEASQLNNLAWLGIVPDESPLKPNPKYGKYRQSEKLAIYQAYIDELIKQGLAYKAYDSSEELAKQHEEQEKAGVASFRYDPTWLKLSESEIKRRDEAKEYSIRLKLPKNKNYSWDDLVRGPISVNSDDIGDFVIMKSDGYPTYNFAVVVDDHQMDITHVLRGEEHITNTPKQLAIYEAFGWDNPVFGHLTIITNMEGKKLSKRDKSLKQFIEDYKNEGYCPEAIFNFLALLGWTSGDKTEIMSHDELIKKFDYNRLSKSPSKFDIVKMEWFSKQYMKKLPNEVIIEKINSPKDAQWNNLFVETYKQQAATISEIKENLKIYLFPKEKLELQIDNDLVVKTFFAHLKAKDFTIENIQAAIDETKNALNVKGKDLFMPIRITATYEEHGPELAKAIYLFGKDLVYKRLTKWS</sequence>
<name>SYE_META1</name>
<reference key="1">
    <citation type="journal article" date="2008" name="Infect. Immun.">
        <title>Genome of Mycoplasma arthritidis.</title>
        <authorList>
            <person name="Dybvig K."/>
            <person name="Zuhua C."/>
            <person name="Lao P."/>
            <person name="Jordan D.S."/>
            <person name="French C.T."/>
            <person name="Tu A.H."/>
            <person name="Loraine A.E."/>
        </authorList>
    </citation>
    <scope>NUCLEOTIDE SEQUENCE [LARGE SCALE GENOMIC DNA]</scope>
    <source>
        <strain>158L3-1</strain>
    </source>
</reference>
<dbReference type="EC" id="6.1.1.17" evidence="1"/>
<dbReference type="EMBL" id="CP001047">
    <property type="protein sequence ID" value="ACF07421.1"/>
    <property type="molecule type" value="Genomic_DNA"/>
</dbReference>
<dbReference type="RefSeq" id="WP_012498378.1">
    <property type="nucleotide sequence ID" value="NC_011025.1"/>
</dbReference>
<dbReference type="SMR" id="B3PN19"/>
<dbReference type="STRING" id="243272.MARTH_orf641"/>
<dbReference type="KEGG" id="mat:MARTH_orf641"/>
<dbReference type="eggNOG" id="COG0008">
    <property type="taxonomic scope" value="Bacteria"/>
</dbReference>
<dbReference type="HOGENOM" id="CLU_015768_6_1_14"/>
<dbReference type="Proteomes" id="UP000008812">
    <property type="component" value="Chromosome"/>
</dbReference>
<dbReference type="GO" id="GO:0005829">
    <property type="term" value="C:cytosol"/>
    <property type="evidence" value="ECO:0007669"/>
    <property type="project" value="TreeGrafter"/>
</dbReference>
<dbReference type="GO" id="GO:0005524">
    <property type="term" value="F:ATP binding"/>
    <property type="evidence" value="ECO:0007669"/>
    <property type="project" value="UniProtKB-UniRule"/>
</dbReference>
<dbReference type="GO" id="GO:0004818">
    <property type="term" value="F:glutamate-tRNA ligase activity"/>
    <property type="evidence" value="ECO:0007669"/>
    <property type="project" value="UniProtKB-UniRule"/>
</dbReference>
<dbReference type="GO" id="GO:0000049">
    <property type="term" value="F:tRNA binding"/>
    <property type="evidence" value="ECO:0007669"/>
    <property type="project" value="InterPro"/>
</dbReference>
<dbReference type="GO" id="GO:0008270">
    <property type="term" value="F:zinc ion binding"/>
    <property type="evidence" value="ECO:0007669"/>
    <property type="project" value="InterPro"/>
</dbReference>
<dbReference type="GO" id="GO:0006424">
    <property type="term" value="P:glutamyl-tRNA aminoacylation"/>
    <property type="evidence" value="ECO:0007669"/>
    <property type="project" value="UniProtKB-UniRule"/>
</dbReference>
<dbReference type="CDD" id="cd00808">
    <property type="entry name" value="GluRS_core"/>
    <property type="match status" value="1"/>
</dbReference>
<dbReference type="FunFam" id="3.40.50.620:FF:000007">
    <property type="entry name" value="Glutamate--tRNA ligase"/>
    <property type="match status" value="1"/>
</dbReference>
<dbReference type="Gene3D" id="1.10.10.350">
    <property type="match status" value="1"/>
</dbReference>
<dbReference type="Gene3D" id="3.40.50.620">
    <property type="entry name" value="HUPs"/>
    <property type="match status" value="1"/>
</dbReference>
<dbReference type="HAMAP" id="MF_00022">
    <property type="entry name" value="Glu_tRNA_synth_type1"/>
    <property type="match status" value="1"/>
</dbReference>
<dbReference type="InterPro" id="IPR045462">
    <property type="entry name" value="aa-tRNA-synth_I_cd-bd"/>
</dbReference>
<dbReference type="InterPro" id="IPR020751">
    <property type="entry name" value="aa-tRNA-synth_I_codon-bd_sub2"/>
</dbReference>
<dbReference type="InterPro" id="IPR001412">
    <property type="entry name" value="aa-tRNA-synth_I_CS"/>
</dbReference>
<dbReference type="InterPro" id="IPR008925">
    <property type="entry name" value="aa_tRNA-synth_I_cd-bd_sf"/>
</dbReference>
<dbReference type="InterPro" id="IPR004527">
    <property type="entry name" value="Glu-tRNA-ligase_bac/mito"/>
</dbReference>
<dbReference type="InterPro" id="IPR000924">
    <property type="entry name" value="Glu/Gln-tRNA-synth"/>
</dbReference>
<dbReference type="InterPro" id="IPR020058">
    <property type="entry name" value="Glu/Gln-tRNA-synth_Ib_cat-dom"/>
</dbReference>
<dbReference type="InterPro" id="IPR049940">
    <property type="entry name" value="GluQ/Sye"/>
</dbReference>
<dbReference type="InterPro" id="IPR033910">
    <property type="entry name" value="GluRS_core"/>
</dbReference>
<dbReference type="InterPro" id="IPR014729">
    <property type="entry name" value="Rossmann-like_a/b/a_fold"/>
</dbReference>
<dbReference type="NCBIfam" id="TIGR00464">
    <property type="entry name" value="gltX_bact"/>
    <property type="match status" value="1"/>
</dbReference>
<dbReference type="PANTHER" id="PTHR43311">
    <property type="entry name" value="GLUTAMATE--TRNA LIGASE"/>
    <property type="match status" value="1"/>
</dbReference>
<dbReference type="PANTHER" id="PTHR43311:SF2">
    <property type="entry name" value="GLUTAMATE--TRNA LIGASE, MITOCHONDRIAL-RELATED"/>
    <property type="match status" value="1"/>
</dbReference>
<dbReference type="Pfam" id="PF19269">
    <property type="entry name" value="Anticodon_2"/>
    <property type="match status" value="1"/>
</dbReference>
<dbReference type="Pfam" id="PF00749">
    <property type="entry name" value="tRNA-synt_1c"/>
    <property type="match status" value="1"/>
</dbReference>
<dbReference type="PRINTS" id="PR00987">
    <property type="entry name" value="TRNASYNTHGLU"/>
</dbReference>
<dbReference type="SUPFAM" id="SSF48163">
    <property type="entry name" value="An anticodon-binding domain of class I aminoacyl-tRNA synthetases"/>
    <property type="match status" value="1"/>
</dbReference>
<dbReference type="SUPFAM" id="SSF52374">
    <property type="entry name" value="Nucleotidylyl transferase"/>
    <property type="match status" value="1"/>
</dbReference>
<dbReference type="PROSITE" id="PS00178">
    <property type="entry name" value="AA_TRNA_LIGASE_I"/>
    <property type="match status" value="1"/>
</dbReference>
<accession>B3PN19</accession>
<proteinExistence type="inferred from homology"/>
<keyword id="KW-0030">Aminoacyl-tRNA synthetase</keyword>
<keyword id="KW-0067">ATP-binding</keyword>
<keyword id="KW-0963">Cytoplasm</keyword>
<keyword id="KW-0436">Ligase</keyword>
<keyword id="KW-0547">Nucleotide-binding</keyword>
<keyword id="KW-0648">Protein biosynthesis</keyword>
<keyword id="KW-1185">Reference proteome</keyword>
<organism>
    <name type="scientific">Metamycoplasma arthritidis (strain 158L3-1)</name>
    <name type="common">Mycoplasma arthritidis</name>
    <dbReference type="NCBI Taxonomy" id="243272"/>
    <lineage>
        <taxon>Bacteria</taxon>
        <taxon>Bacillati</taxon>
        <taxon>Mycoplasmatota</taxon>
        <taxon>Mycoplasmoidales</taxon>
        <taxon>Metamycoplasmataceae</taxon>
        <taxon>Metamycoplasma</taxon>
    </lineage>
</organism>
<feature type="chain" id="PRO_1000090090" description="Glutamate--tRNA ligase">
    <location>
        <begin position="1"/>
        <end position="464"/>
    </location>
</feature>
<feature type="short sequence motif" description="'HIGH' region" evidence="1">
    <location>
        <begin position="11"/>
        <end position="21"/>
    </location>
</feature>
<feature type="short sequence motif" description="'KMSKS' region" evidence="1">
    <location>
        <begin position="253"/>
        <end position="257"/>
    </location>
</feature>
<feature type="binding site" evidence="1">
    <location>
        <position position="256"/>
    </location>
    <ligand>
        <name>ATP</name>
        <dbReference type="ChEBI" id="CHEBI:30616"/>
    </ligand>
</feature>
<protein>
    <recommendedName>
        <fullName evidence="1">Glutamate--tRNA ligase</fullName>
        <ecNumber evidence="1">6.1.1.17</ecNumber>
    </recommendedName>
    <alternativeName>
        <fullName evidence="1">Glutamyl-tRNA synthetase</fullName>
        <shortName evidence="1">GluRS</shortName>
    </alternativeName>
</protein>
<comment type="function">
    <text evidence="1">Catalyzes the attachment of glutamate to tRNA(Glu) in a two-step reaction: glutamate is first activated by ATP to form Glu-AMP and then transferred to the acceptor end of tRNA(Glu).</text>
</comment>
<comment type="catalytic activity">
    <reaction evidence="1">
        <text>tRNA(Glu) + L-glutamate + ATP = L-glutamyl-tRNA(Glu) + AMP + diphosphate</text>
        <dbReference type="Rhea" id="RHEA:23540"/>
        <dbReference type="Rhea" id="RHEA-COMP:9663"/>
        <dbReference type="Rhea" id="RHEA-COMP:9680"/>
        <dbReference type="ChEBI" id="CHEBI:29985"/>
        <dbReference type="ChEBI" id="CHEBI:30616"/>
        <dbReference type="ChEBI" id="CHEBI:33019"/>
        <dbReference type="ChEBI" id="CHEBI:78442"/>
        <dbReference type="ChEBI" id="CHEBI:78520"/>
        <dbReference type="ChEBI" id="CHEBI:456215"/>
        <dbReference type="EC" id="6.1.1.17"/>
    </reaction>
</comment>
<comment type="subunit">
    <text evidence="1">Monomer.</text>
</comment>
<comment type="subcellular location">
    <subcellularLocation>
        <location evidence="1">Cytoplasm</location>
    </subcellularLocation>
</comment>
<comment type="similarity">
    <text evidence="1">Belongs to the class-I aminoacyl-tRNA synthetase family. Glutamate--tRNA ligase type 1 subfamily.</text>
</comment>
<gene>
    <name evidence="1" type="primary">gltX</name>
    <name type="ordered locus">MARTH_orf641</name>
</gene>